<evidence type="ECO:0000255" key="1">
    <source>
        <dbReference type="HAMAP-Rule" id="MF_00176"/>
    </source>
</evidence>
<comment type="function">
    <text evidence="1">Catalyzes the attachment of serine to tRNA(Ser). Is also able to aminoacylate tRNA(Sec) with serine, to form the misacylated tRNA L-seryl-tRNA(Sec), which will be further converted into selenocysteinyl-tRNA(Sec).</text>
</comment>
<comment type="catalytic activity">
    <reaction evidence="1">
        <text>tRNA(Ser) + L-serine + ATP = L-seryl-tRNA(Ser) + AMP + diphosphate + H(+)</text>
        <dbReference type="Rhea" id="RHEA:12292"/>
        <dbReference type="Rhea" id="RHEA-COMP:9669"/>
        <dbReference type="Rhea" id="RHEA-COMP:9703"/>
        <dbReference type="ChEBI" id="CHEBI:15378"/>
        <dbReference type="ChEBI" id="CHEBI:30616"/>
        <dbReference type="ChEBI" id="CHEBI:33019"/>
        <dbReference type="ChEBI" id="CHEBI:33384"/>
        <dbReference type="ChEBI" id="CHEBI:78442"/>
        <dbReference type="ChEBI" id="CHEBI:78533"/>
        <dbReference type="ChEBI" id="CHEBI:456215"/>
        <dbReference type="EC" id="6.1.1.11"/>
    </reaction>
</comment>
<comment type="catalytic activity">
    <reaction evidence="1">
        <text>tRNA(Sec) + L-serine + ATP = L-seryl-tRNA(Sec) + AMP + diphosphate + H(+)</text>
        <dbReference type="Rhea" id="RHEA:42580"/>
        <dbReference type="Rhea" id="RHEA-COMP:9742"/>
        <dbReference type="Rhea" id="RHEA-COMP:10128"/>
        <dbReference type="ChEBI" id="CHEBI:15378"/>
        <dbReference type="ChEBI" id="CHEBI:30616"/>
        <dbReference type="ChEBI" id="CHEBI:33019"/>
        <dbReference type="ChEBI" id="CHEBI:33384"/>
        <dbReference type="ChEBI" id="CHEBI:78442"/>
        <dbReference type="ChEBI" id="CHEBI:78533"/>
        <dbReference type="ChEBI" id="CHEBI:456215"/>
        <dbReference type="EC" id="6.1.1.11"/>
    </reaction>
</comment>
<comment type="pathway">
    <text evidence="1">Aminoacyl-tRNA biosynthesis; selenocysteinyl-tRNA(Sec) biosynthesis; L-seryl-tRNA(Sec) from L-serine and tRNA(Sec): step 1/1.</text>
</comment>
<comment type="subunit">
    <text evidence="1">Homodimer. The tRNA molecule binds across the dimer.</text>
</comment>
<comment type="subcellular location">
    <subcellularLocation>
        <location evidence="1">Cytoplasm</location>
    </subcellularLocation>
</comment>
<comment type="domain">
    <text evidence="1">Consists of two distinct domains, a catalytic core and a N-terminal extension that is involved in tRNA binding.</text>
</comment>
<comment type="similarity">
    <text evidence="1">Belongs to the class-II aminoacyl-tRNA synthetase family. Type-1 seryl-tRNA synthetase subfamily.</text>
</comment>
<dbReference type="EC" id="6.1.1.11" evidence="1"/>
<dbReference type="EMBL" id="CP000949">
    <property type="protein sequence ID" value="ACA73888.1"/>
    <property type="molecule type" value="Genomic_DNA"/>
</dbReference>
<dbReference type="SMR" id="B1JBE0"/>
<dbReference type="STRING" id="390235.PputW619_3404"/>
<dbReference type="KEGG" id="ppw:PputW619_3404"/>
<dbReference type="eggNOG" id="COG0172">
    <property type="taxonomic scope" value="Bacteria"/>
</dbReference>
<dbReference type="HOGENOM" id="CLU_023797_1_1_6"/>
<dbReference type="OrthoDB" id="9804647at2"/>
<dbReference type="UniPathway" id="UPA00906">
    <property type="reaction ID" value="UER00895"/>
</dbReference>
<dbReference type="GO" id="GO:0005737">
    <property type="term" value="C:cytoplasm"/>
    <property type="evidence" value="ECO:0007669"/>
    <property type="project" value="UniProtKB-SubCell"/>
</dbReference>
<dbReference type="GO" id="GO:0005524">
    <property type="term" value="F:ATP binding"/>
    <property type="evidence" value="ECO:0007669"/>
    <property type="project" value="UniProtKB-UniRule"/>
</dbReference>
<dbReference type="GO" id="GO:0004828">
    <property type="term" value="F:serine-tRNA ligase activity"/>
    <property type="evidence" value="ECO:0007669"/>
    <property type="project" value="UniProtKB-UniRule"/>
</dbReference>
<dbReference type="GO" id="GO:0016260">
    <property type="term" value="P:selenocysteine biosynthetic process"/>
    <property type="evidence" value="ECO:0007669"/>
    <property type="project" value="UniProtKB-UniRule"/>
</dbReference>
<dbReference type="GO" id="GO:0006434">
    <property type="term" value="P:seryl-tRNA aminoacylation"/>
    <property type="evidence" value="ECO:0007669"/>
    <property type="project" value="UniProtKB-UniRule"/>
</dbReference>
<dbReference type="CDD" id="cd00770">
    <property type="entry name" value="SerRS_core"/>
    <property type="match status" value="1"/>
</dbReference>
<dbReference type="Gene3D" id="3.30.930.10">
    <property type="entry name" value="Bira Bifunctional Protein, Domain 2"/>
    <property type="match status" value="1"/>
</dbReference>
<dbReference type="Gene3D" id="1.10.287.40">
    <property type="entry name" value="Serine-tRNA synthetase, tRNA binding domain"/>
    <property type="match status" value="1"/>
</dbReference>
<dbReference type="HAMAP" id="MF_00176">
    <property type="entry name" value="Ser_tRNA_synth_type1"/>
    <property type="match status" value="1"/>
</dbReference>
<dbReference type="InterPro" id="IPR002314">
    <property type="entry name" value="aa-tRNA-synt_IIb"/>
</dbReference>
<dbReference type="InterPro" id="IPR006195">
    <property type="entry name" value="aa-tRNA-synth_II"/>
</dbReference>
<dbReference type="InterPro" id="IPR045864">
    <property type="entry name" value="aa-tRNA-synth_II/BPL/LPL"/>
</dbReference>
<dbReference type="InterPro" id="IPR002317">
    <property type="entry name" value="Ser-tRNA-ligase_type_1"/>
</dbReference>
<dbReference type="InterPro" id="IPR015866">
    <property type="entry name" value="Ser-tRNA-synth_1_N"/>
</dbReference>
<dbReference type="InterPro" id="IPR042103">
    <property type="entry name" value="SerRS_1_N_sf"/>
</dbReference>
<dbReference type="InterPro" id="IPR033729">
    <property type="entry name" value="SerRS_core"/>
</dbReference>
<dbReference type="InterPro" id="IPR010978">
    <property type="entry name" value="tRNA-bd_arm"/>
</dbReference>
<dbReference type="NCBIfam" id="TIGR00414">
    <property type="entry name" value="serS"/>
    <property type="match status" value="1"/>
</dbReference>
<dbReference type="PANTHER" id="PTHR43697:SF1">
    <property type="entry name" value="SERINE--TRNA LIGASE"/>
    <property type="match status" value="1"/>
</dbReference>
<dbReference type="PANTHER" id="PTHR43697">
    <property type="entry name" value="SERYL-TRNA SYNTHETASE"/>
    <property type="match status" value="1"/>
</dbReference>
<dbReference type="Pfam" id="PF02403">
    <property type="entry name" value="Seryl_tRNA_N"/>
    <property type="match status" value="1"/>
</dbReference>
<dbReference type="Pfam" id="PF00587">
    <property type="entry name" value="tRNA-synt_2b"/>
    <property type="match status" value="1"/>
</dbReference>
<dbReference type="PIRSF" id="PIRSF001529">
    <property type="entry name" value="Ser-tRNA-synth_IIa"/>
    <property type="match status" value="1"/>
</dbReference>
<dbReference type="PRINTS" id="PR00981">
    <property type="entry name" value="TRNASYNTHSER"/>
</dbReference>
<dbReference type="SUPFAM" id="SSF55681">
    <property type="entry name" value="Class II aaRS and biotin synthetases"/>
    <property type="match status" value="1"/>
</dbReference>
<dbReference type="SUPFAM" id="SSF46589">
    <property type="entry name" value="tRNA-binding arm"/>
    <property type="match status" value="1"/>
</dbReference>
<dbReference type="PROSITE" id="PS50862">
    <property type="entry name" value="AA_TRNA_LIGASE_II"/>
    <property type="match status" value="1"/>
</dbReference>
<proteinExistence type="inferred from homology"/>
<protein>
    <recommendedName>
        <fullName evidence="1">Serine--tRNA ligase</fullName>
        <ecNumber evidence="1">6.1.1.11</ecNumber>
    </recommendedName>
    <alternativeName>
        <fullName evidence="1">Seryl-tRNA synthetase</fullName>
        <shortName evidence="1">SerRS</shortName>
    </alternativeName>
    <alternativeName>
        <fullName evidence="1">Seryl-tRNA(Ser/Sec) synthetase</fullName>
    </alternativeName>
</protein>
<reference key="1">
    <citation type="submission" date="2008-02" db="EMBL/GenBank/DDBJ databases">
        <title>Complete sequence of Pseudomonas putida W619.</title>
        <authorList>
            <person name="Copeland A."/>
            <person name="Lucas S."/>
            <person name="Lapidus A."/>
            <person name="Barry K."/>
            <person name="Detter J.C."/>
            <person name="Glavina del Rio T."/>
            <person name="Dalin E."/>
            <person name="Tice H."/>
            <person name="Pitluck S."/>
            <person name="Chain P."/>
            <person name="Malfatti S."/>
            <person name="Shin M."/>
            <person name="Vergez L."/>
            <person name="Schmutz J."/>
            <person name="Larimer F."/>
            <person name="Land M."/>
            <person name="Hauser L."/>
            <person name="Kyrpides N."/>
            <person name="Kim E."/>
            <person name="Taghavi S."/>
            <person name="Vangronsveld D."/>
            <person name="van der Lelie D."/>
            <person name="Richardson P."/>
        </authorList>
    </citation>
    <scope>NUCLEOTIDE SEQUENCE [LARGE SCALE GENOMIC DNA]</scope>
    <source>
        <strain>W619</strain>
    </source>
</reference>
<name>SYS_PSEPW</name>
<organism>
    <name type="scientific">Pseudomonas putida (strain W619)</name>
    <dbReference type="NCBI Taxonomy" id="390235"/>
    <lineage>
        <taxon>Bacteria</taxon>
        <taxon>Pseudomonadati</taxon>
        <taxon>Pseudomonadota</taxon>
        <taxon>Gammaproteobacteria</taxon>
        <taxon>Pseudomonadales</taxon>
        <taxon>Pseudomonadaceae</taxon>
        <taxon>Pseudomonas</taxon>
    </lineage>
</organism>
<keyword id="KW-0030">Aminoacyl-tRNA synthetase</keyword>
<keyword id="KW-0067">ATP-binding</keyword>
<keyword id="KW-0963">Cytoplasm</keyword>
<keyword id="KW-0436">Ligase</keyword>
<keyword id="KW-0547">Nucleotide-binding</keyword>
<keyword id="KW-0648">Protein biosynthesis</keyword>
<feature type="chain" id="PRO_1000098110" description="Serine--tRNA ligase">
    <location>
        <begin position="1"/>
        <end position="426"/>
    </location>
</feature>
<feature type="binding site" evidence="1">
    <location>
        <begin position="233"/>
        <end position="235"/>
    </location>
    <ligand>
        <name>L-serine</name>
        <dbReference type="ChEBI" id="CHEBI:33384"/>
    </ligand>
</feature>
<feature type="binding site" evidence="1">
    <location>
        <begin position="264"/>
        <end position="266"/>
    </location>
    <ligand>
        <name>ATP</name>
        <dbReference type="ChEBI" id="CHEBI:30616"/>
    </ligand>
</feature>
<feature type="binding site" evidence="1">
    <location>
        <position position="287"/>
    </location>
    <ligand>
        <name>L-serine</name>
        <dbReference type="ChEBI" id="CHEBI:33384"/>
    </ligand>
</feature>
<feature type="binding site" evidence="1">
    <location>
        <begin position="351"/>
        <end position="354"/>
    </location>
    <ligand>
        <name>ATP</name>
        <dbReference type="ChEBI" id="CHEBI:30616"/>
    </ligand>
</feature>
<feature type="binding site" evidence="1">
    <location>
        <position position="387"/>
    </location>
    <ligand>
        <name>L-serine</name>
        <dbReference type="ChEBI" id="CHEBI:33384"/>
    </ligand>
</feature>
<gene>
    <name evidence="1" type="primary">serS</name>
    <name type="ordered locus">PputW619_3404</name>
</gene>
<accession>B1JBE0</accession>
<sequence length="426" mass="46858">MLDSKLLRGQLQEVADRLASRGFSLDVARIESLEERRKAVQTRTEQLQAERNARSKSIGQAKAKGEDIAPLMADVERMANELAAGKVELDGIQAELDGIVLTIPNLPDASVPVGASEDDNVEVRRWGTPRAFDFAIKDHVALGEISGGLDFEAAAKLSGARFAVLRGPIARLHRALAQFMINLHTGEHGYEEHYTPYLVQAPALQGTGQLPKFEEDLFKITREGEADFYLIPTAEVSLTNLVAGEIIDAKQLPLKLVAHTPCFRSEAGASGRDTRGMIRQHQFDKVEMVQVVEPSKSMEALEGLTANAERVLQLLELPYRVLALCTGDMGFGAVKTYDLEVWVPSQDKYREISSCSNCGDFQARRMQARWRNPETGKPELVHTLNGSGLAVGRTLVAVLENYQQADGSIRVPEVLKPYMGGVEVIR</sequence>